<gene>
    <name evidence="1" type="primary">engB</name>
    <name type="ordered locus">Bphy_2808</name>
</gene>
<feature type="chain" id="PRO_1000115958" description="Probable GTP-binding protein EngB">
    <location>
        <begin position="1"/>
        <end position="220"/>
    </location>
</feature>
<feature type="domain" description="EngB-type G" evidence="1">
    <location>
        <begin position="24"/>
        <end position="207"/>
    </location>
</feature>
<feature type="binding site" evidence="1">
    <location>
        <begin position="32"/>
        <end position="39"/>
    </location>
    <ligand>
        <name>GTP</name>
        <dbReference type="ChEBI" id="CHEBI:37565"/>
    </ligand>
</feature>
<feature type="binding site" evidence="1">
    <location>
        <position position="39"/>
    </location>
    <ligand>
        <name>Mg(2+)</name>
        <dbReference type="ChEBI" id="CHEBI:18420"/>
    </ligand>
</feature>
<feature type="binding site" evidence="1">
    <location>
        <begin position="59"/>
        <end position="63"/>
    </location>
    <ligand>
        <name>GTP</name>
        <dbReference type="ChEBI" id="CHEBI:37565"/>
    </ligand>
</feature>
<feature type="binding site" evidence="1">
    <location>
        <position position="61"/>
    </location>
    <ligand>
        <name>Mg(2+)</name>
        <dbReference type="ChEBI" id="CHEBI:18420"/>
    </ligand>
</feature>
<feature type="binding site" evidence="1">
    <location>
        <begin position="81"/>
        <end position="84"/>
    </location>
    <ligand>
        <name>GTP</name>
        <dbReference type="ChEBI" id="CHEBI:37565"/>
    </ligand>
</feature>
<feature type="binding site" evidence="1">
    <location>
        <begin position="148"/>
        <end position="151"/>
    </location>
    <ligand>
        <name>GTP</name>
        <dbReference type="ChEBI" id="CHEBI:37565"/>
    </ligand>
</feature>
<feature type="binding site" evidence="1">
    <location>
        <begin position="185"/>
        <end position="188"/>
    </location>
    <ligand>
        <name>GTP</name>
        <dbReference type="ChEBI" id="CHEBI:37565"/>
    </ligand>
</feature>
<proteinExistence type="inferred from homology"/>
<accession>B2JI34</accession>
<organism>
    <name type="scientific">Paraburkholderia phymatum (strain DSM 17167 / CIP 108236 / LMG 21445 / STM815)</name>
    <name type="common">Burkholderia phymatum</name>
    <dbReference type="NCBI Taxonomy" id="391038"/>
    <lineage>
        <taxon>Bacteria</taxon>
        <taxon>Pseudomonadati</taxon>
        <taxon>Pseudomonadota</taxon>
        <taxon>Betaproteobacteria</taxon>
        <taxon>Burkholderiales</taxon>
        <taxon>Burkholderiaceae</taxon>
        <taxon>Paraburkholderia</taxon>
    </lineage>
</organism>
<evidence type="ECO:0000255" key="1">
    <source>
        <dbReference type="HAMAP-Rule" id="MF_00321"/>
    </source>
</evidence>
<name>ENGB_PARP8</name>
<sequence length="220" mass="24269">MSFLLHQARFFTTVNHLRDLPPSPQPEVAFAGRSNAGKSTAINILCNQKRLAFASKTPGRTQHINYFSVGPAAEPVANLVDLPGYGYAEVPGAAKAHWEQLLSTYLQTRSQLRGMILMMDSRRPLTELDRRMIEWFAPTGKPIHTLLTKCDKLTRQESVNALRATKKGLDEYRAAGYQGELTAQLFSALKRIGLDEAHELIESWIAPGLAGDPDGPVAAE</sequence>
<reference key="1">
    <citation type="journal article" date="2014" name="Stand. Genomic Sci.">
        <title>Complete genome sequence of Burkholderia phymatum STM815(T), a broad host range and efficient nitrogen-fixing symbiont of Mimosa species.</title>
        <authorList>
            <person name="Moulin L."/>
            <person name="Klonowska A."/>
            <person name="Caroline B."/>
            <person name="Booth K."/>
            <person name="Vriezen J.A."/>
            <person name="Melkonian R."/>
            <person name="James E.K."/>
            <person name="Young J.P."/>
            <person name="Bena G."/>
            <person name="Hauser L."/>
            <person name="Land M."/>
            <person name="Kyrpides N."/>
            <person name="Bruce D."/>
            <person name="Chain P."/>
            <person name="Copeland A."/>
            <person name="Pitluck S."/>
            <person name="Woyke T."/>
            <person name="Lizotte-Waniewski M."/>
            <person name="Bristow J."/>
            <person name="Riley M."/>
        </authorList>
    </citation>
    <scope>NUCLEOTIDE SEQUENCE [LARGE SCALE GENOMIC DNA]</scope>
    <source>
        <strain>DSM 17167 / CIP 108236 / LMG 21445 / STM815</strain>
    </source>
</reference>
<protein>
    <recommendedName>
        <fullName evidence="1">Probable GTP-binding protein EngB</fullName>
    </recommendedName>
</protein>
<dbReference type="EMBL" id="CP001043">
    <property type="protein sequence ID" value="ACC71980.1"/>
    <property type="molecule type" value="Genomic_DNA"/>
</dbReference>
<dbReference type="RefSeq" id="WP_012402177.1">
    <property type="nucleotide sequence ID" value="NC_010622.1"/>
</dbReference>
<dbReference type="SMR" id="B2JI34"/>
<dbReference type="STRING" id="391038.Bphy_2808"/>
<dbReference type="KEGG" id="bph:Bphy_2808"/>
<dbReference type="eggNOG" id="COG0218">
    <property type="taxonomic scope" value="Bacteria"/>
</dbReference>
<dbReference type="HOGENOM" id="CLU_033732_1_1_4"/>
<dbReference type="OrthoDB" id="9804921at2"/>
<dbReference type="Proteomes" id="UP000001192">
    <property type="component" value="Chromosome 1"/>
</dbReference>
<dbReference type="GO" id="GO:0005829">
    <property type="term" value="C:cytosol"/>
    <property type="evidence" value="ECO:0007669"/>
    <property type="project" value="TreeGrafter"/>
</dbReference>
<dbReference type="GO" id="GO:0005525">
    <property type="term" value="F:GTP binding"/>
    <property type="evidence" value="ECO:0007669"/>
    <property type="project" value="UniProtKB-UniRule"/>
</dbReference>
<dbReference type="GO" id="GO:0046872">
    <property type="term" value="F:metal ion binding"/>
    <property type="evidence" value="ECO:0007669"/>
    <property type="project" value="UniProtKB-KW"/>
</dbReference>
<dbReference type="GO" id="GO:0000917">
    <property type="term" value="P:division septum assembly"/>
    <property type="evidence" value="ECO:0007669"/>
    <property type="project" value="UniProtKB-KW"/>
</dbReference>
<dbReference type="CDD" id="cd01876">
    <property type="entry name" value="YihA_EngB"/>
    <property type="match status" value="1"/>
</dbReference>
<dbReference type="FunFam" id="3.40.50.300:FF:000098">
    <property type="entry name" value="Probable GTP-binding protein EngB"/>
    <property type="match status" value="1"/>
</dbReference>
<dbReference type="Gene3D" id="3.40.50.300">
    <property type="entry name" value="P-loop containing nucleotide triphosphate hydrolases"/>
    <property type="match status" value="1"/>
</dbReference>
<dbReference type="HAMAP" id="MF_00321">
    <property type="entry name" value="GTPase_EngB"/>
    <property type="match status" value="1"/>
</dbReference>
<dbReference type="InterPro" id="IPR030393">
    <property type="entry name" value="G_ENGB_dom"/>
</dbReference>
<dbReference type="InterPro" id="IPR006073">
    <property type="entry name" value="GTP-bd"/>
</dbReference>
<dbReference type="InterPro" id="IPR019987">
    <property type="entry name" value="GTP-bd_ribosome_bio_YsxC"/>
</dbReference>
<dbReference type="InterPro" id="IPR027417">
    <property type="entry name" value="P-loop_NTPase"/>
</dbReference>
<dbReference type="NCBIfam" id="TIGR03598">
    <property type="entry name" value="GTPase_YsxC"/>
    <property type="match status" value="1"/>
</dbReference>
<dbReference type="PANTHER" id="PTHR11649:SF13">
    <property type="entry name" value="ENGB-TYPE G DOMAIN-CONTAINING PROTEIN"/>
    <property type="match status" value="1"/>
</dbReference>
<dbReference type="PANTHER" id="PTHR11649">
    <property type="entry name" value="MSS1/TRME-RELATED GTP-BINDING PROTEIN"/>
    <property type="match status" value="1"/>
</dbReference>
<dbReference type="Pfam" id="PF01926">
    <property type="entry name" value="MMR_HSR1"/>
    <property type="match status" value="1"/>
</dbReference>
<dbReference type="SUPFAM" id="SSF52540">
    <property type="entry name" value="P-loop containing nucleoside triphosphate hydrolases"/>
    <property type="match status" value="1"/>
</dbReference>
<dbReference type="PROSITE" id="PS51706">
    <property type="entry name" value="G_ENGB"/>
    <property type="match status" value="1"/>
</dbReference>
<keyword id="KW-0131">Cell cycle</keyword>
<keyword id="KW-0132">Cell division</keyword>
<keyword id="KW-0342">GTP-binding</keyword>
<keyword id="KW-0460">Magnesium</keyword>
<keyword id="KW-0479">Metal-binding</keyword>
<keyword id="KW-0547">Nucleotide-binding</keyword>
<keyword id="KW-1185">Reference proteome</keyword>
<keyword id="KW-0717">Septation</keyword>
<comment type="function">
    <text evidence="1">Necessary for normal cell division and for the maintenance of normal septation.</text>
</comment>
<comment type="cofactor">
    <cofactor evidence="1">
        <name>Mg(2+)</name>
        <dbReference type="ChEBI" id="CHEBI:18420"/>
    </cofactor>
</comment>
<comment type="similarity">
    <text evidence="1">Belongs to the TRAFAC class TrmE-Era-EngA-EngB-Septin-like GTPase superfamily. EngB GTPase family.</text>
</comment>